<gene>
    <name type="primary">PERK15</name>
    <name type="ordered locus">At1g52290</name>
    <name type="ORF">F19K6.9</name>
</gene>
<evidence type="ECO:0000250" key="1"/>
<evidence type="ECO:0000250" key="2">
    <source>
        <dbReference type="UniProtKB" id="O48814"/>
    </source>
</evidence>
<evidence type="ECO:0000255" key="3"/>
<evidence type="ECO:0000255" key="4">
    <source>
        <dbReference type="PROSITE-ProRule" id="PRU00159"/>
    </source>
</evidence>
<evidence type="ECO:0000256" key="5">
    <source>
        <dbReference type="SAM" id="MobiDB-lite"/>
    </source>
</evidence>
<evidence type="ECO:0000269" key="6">
    <source>
    </source>
</evidence>
<proteinExistence type="evidence at transcript level"/>
<reference key="1">
    <citation type="journal article" date="2000" name="Nature">
        <title>Sequence and analysis of chromosome 1 of the plant Arabidopsis thaliana.</title>
        <authorList>
            <person name="Theologis A."/>
            <person name="Ecker J.R."/>
            <person name="Palm C.J."/>
            <person name="Federspiel N.A."/>
            <person name="Kaul S."/>
            <person name="White O."/>
            <person name="Alonso J."/>
            <person name="Altafi H."/>
            <person name="Araujo R."/>
            <person name="Bowman C.L."/>
            <person name="Brooks S.Y."/>
            <person name="Buehler E."/>
            <person name="Chan A."/>
            <person name="Chao Q."/>
            <person name="Chen H."/>
            <person name="Cheuk R.F."/>
            <person name="Chin C.W."/>
            <person name="Chung M.K."/>
            <person name="Conn L."/>
            <person name="Conway A.B."/>
            <person name="Conway A.R."/>
            <person name="Creasy T.H."/>
            <person name="Dewar K."/>
            <person name="Dunn P."/>
            <person name="Etgu P."/>
            <person name="Feldblyum T.V."/>
            <person name="Feng J.-D."/>
            <person name="Fong B."/>
            <person name="Fujii C.Y."/>
            <person name="Gill J.E."/>
            <person name="Goldsmith A.D."/>
            <person name="Haas B."/>
            <person name="Hansen N.F."/>
            <person name="Hughes B."/>
            <person name="Huizar L."/>
            <person name="Hunter J.L."/>
            <person name="Jenkins J."/>
            <person name="Johnson-Hopson C."/>
            <person name="Khan S."/>
            <person name="Khaykin E."/>
            <person name="Kim C.J."/>
            <person name="Koo H.L."/>
            <person name="Kremenetskaia I."/>
            <person name="Kurtz D.B."/>
            <person name="Kwan A."/>
            <person name="Lam B."/>
            <person name="Langin-Hooper S."/>
            <person name="Lee A."/>
            <person name="Lee J.M."/>
            <person name="Lenz C.A."/>
            <person name="Li J.H."/>
            <person name="Li Y.-P."/>
            <person name="Lin X."/>
            <person name="Liu S.X."/>
            <person name="Liu Z.A."/>
            <person name="Luros J.S."/>
            <person name="Maiti R."/>
            <person name="Marziali A."/>
            <person name="Militscher J."/>
            <person name="Miranda M."/>
            <person name="Nguyen M."/>
            <person name="Nierman W.C."/>
            <person name="Osborne B.I."/>
            <person name="Pai G."/>
            <person name="Peterson J."/>
            <person name="Pham P.K."/>
            <person name="Rizzo M."/>
            <person name="Rooney T."/>
            <person name="Rowley D."/>
            <person name="Sakano H."/>
            <person name="Salzberg S.L."/>
            <person name="Schwartz J.R."/>
            <person name="Shinn P."/>
            <person name="Southwick A.M."/>
            <person name="Sun H."/>
            <person name="Tallon L.J."/>
            <person name="Tambunga G."/>
            <person name="Toriumi M.J."/>
            <person name="Town C.D."/>
            <person name="Utterback T."/>
            <person name="Van Aken S."/>
            <person name="Vaysberg M."/>
            <person name="Vysotskaia V.S."/>
            <person name="Walker M."/>
            <person name="Wu D."/>
            <person name="Yu G."/>
            <person name="Fraser C.M."/>
            <person name="Venter J.C."/>
            <person name="Davis R.W."/>
        </authorList>
    </citation>
    <scope>NUCLEOTIDE SEQUENCE [LARGE SCALE GENOMIC DNA]</scope>
    <source>
        <strain>cv. Columbia</strain>
    </source>
</reference>
<reference key="2">
    <citation type="journal article" date="2017" name="Plant J.">
        <title>Araport11: a complete reannotation of the Arabidopsis thaliana reference genome.</title>
        <authorList>
            <person name="Cheng C.Y."/>
            <person name="Krishnakumar V."/>
            <person name="Chan A.P."/>
            <person name="Thibaud-Nissen F."/>
            <person name="Schobel S."/>
            <person name="Town C.D."/>
        </authorList>
    </citation>
    <scope>GENOME REANNOTATION</scope>
    <source>
        <strain>cv. Columbia</strain>
    </source>
</reference>
<reference key="3">
    <citation type="submission" date="2004-03" db="EMBL/GenBank/DDBJ databases">
        <title>Arabidopsis ORF clones.</title>
        <authorList>
            <person name="Cheuk R.F."/>
            <person name="Chen H."/>
            <person name="Kim C.J."/>
            <person name="Shinn P."/>
            <person name="Carninci P."/>
            <person name="Hayashizaki Y."/>
            <person name="Ishida J."/>
            <person name="Kamiya A."/>
            <person name="Kawai J."/>
            <person name="Narusaka M."/>
            <person name="Sakurai T."/>
            <person name="Satou M."/>
            <person name="Seki M."/>
            <person name="Shinozaki K."/>
            <person name="Ecker J.R."/>
        </authorList>
    </citation>
    <scope>NUCLEOTIDE SEQUENCE [LARGE SCALE MRNA]</scope>
    <source>
        <strain>cv. Columbia</strain>
    </source>
</reference>
<reference key="4">
    <citation type="submission" date="2005-03" db="EMBL/GenBank/DDBJ databases">
        <title>Large-scale analysis of RIKEN Arabidopsis full-length (RAFL) cDNAs.</title>
        <authorList>
            <person name="Totoki Y."/>
            <person name="Seki M."/>
            <person name="Ishida J."/>
            <person name="Nakajima M."/>
            <person name="Enju A."/>
            <person name="Kamiya A."/>
            <person name="Narusaka M."/>
            <person name="Shin-i T."/>
            <person name="Nakagawa M."/>
            <person name="Sakamoto N."/>
            <person name="Oishi K."/>
            <person name="Kohara Y."/>
            <person name="Kobayashi M."/>
            <person name="Toyoda A."/>
            <person name="Sakaki Y."/>
            <person name="Sakurai T."/>
            <person name="Iida K."/>
            <person name="Akiyama K."/>
            <person name="Satou M."/>
            <person name="Toyoda T."/>
            <person name="Konagaya A."/>
            <person name="Carninci P."/>
            <person name="Kawai J."/>
            <person name="Hayashizaki Y."/>
            <person name="Shinozaki K."/>
        </authorList>
    </citation>
    <scope>NUCLEOTIDE SEQUENCE [LARGE SCALE MRNA]</scope>
    <source>
        <strain>cv. Columbia</strain>
    </source>
</reference>
<reference key="5">
    <citation type="journal article" date="2004" name="Plant Cell Physiol.">
        <title>A comprehensive expression analysis of the Arabidopsis proline-rich extensin-like receptor kinase gene family using bioinformatic and experimental approaches.</title>
        <authorList>
            <person name="Nakhamchik A."/>
            <person name="Zhao Z."/>
            <person name="Provart N.J."/>
            <person name="Shiu S.-H."/>
            <person name="Keatley S.K."/>
            <person name="Cameron R.K."/>
            <person name="Goring D.R."/>
        </authorList>
    </citation>
    <scope>TISSUE SPECIFICITY</scope>
    <scope>GENE FAMILY</scope>
    <scope>NOMENCLATURE</scope>
</reference>
<comment type="catalytic activity">
    <reaction>
        <text>L-seryl-[protein] + ATP = O-phospho-L-seryl-[protein] + ADP + H(+)</text>
        <dbReference type="Rhea" id="RHEA:17989"/>
        <dbReference type="Rhea" id="RHEA-COMP:9863"/>
        <dbReference type="Rhea" id="RHEA-COMP:11604"/>
        <dbReference type="ChEBI" id="CHEBI:15378"/>
        <dbReference type="ChEBI" id="CHEBI:29999"/>
        <dbReference type="ChEBI" id="CHEBI:30616"/>
        <dbReference type="ChEBI" id="CHEBI:83421"/>
        <dbReference type="ChEBI" id="CHEBI:456216"/>
        <dbReference type="EC" id="2.7.11.1"/>
    </reaction>
</comment>
<comment type="catalytic activity">
    <reaction>
        <text>L-threonyl-[protein] + ATP = O-phospho-L-threonyl-[protein] + ADP + H(+)</text>
        <dbReference type="Rhea" id="RHEA:46608"/>
        <dbReference type="Rhea" id="RHEA-COMP:11060"/>
        <dbReference type="Rhea" id="RHEA-COMP:11605"/>
        <dbReference type="ChEBI" id="CHEBI:15378"/>
        <dbReference type="ChEBI" id="CHEBI:30013"/>
        <dbReference type="ChEBI" id="CHEBI:30616"/>
        <dbReference type="ChEBI" id="CHEBI:61977"/>
        <dbReference type="ChEBI" id="CHEBI:456216"/>
        <dbReference type="EC" id="2.7.11.1"/>
    </reaction>
</comment>
<comment type="subcellular location">
    <subcellularLocation>
        <location evidence="1">Cell membrane</location>
        <topology evidence="1">Single-pass membrane protein</topology>
    </subcellularLocation>
</comment>
<comment type="tissue specificity">
    <text evidence="6">Mostly expressed in inflorescence bolts, and, to a lower extent, in flower buds and siliques.</text>
</comment>
<comment type="similarity">
    <text evidence="4">Belongs to the protein kinase superfamily. Ser/Thr protein kinase family.</text>
</comment>
<protein>
    <recommendedName>
        <fullName>Proline-rich receptor-like protein kinase PERK15</fullName>
        <ecNumber>2.7.11.1</ecNumber>
    </recommendedName>
    <alternativeName>
        <fullName>Proline-rich extensin-like receptor kinase 15</fullName>
        <shortName>AtPERK15</shortName>
    </alternativeName>
</protein>
<feature type="chain" id="PRO_0000400067" description="Proline-rich receptor-like protein kinase PERK15">
    <location>
        <begin position="1"/>
        <end position="509"/>
    </location>
</feature>
<feature type="topological domain" description="Extracellular" evidence="3">
    <location>
        <begin position="1"/>
        <end position="61"/>
    </location>
</feature>
<feature type="transmembrane region" description="Helical" evidence="3">
    <location>
        <begin position="62"/>
        <end position="82"/>
    </location>
</feature>
<feature type="topological domain" description="Cytoplasmic" evidence="3">
    <location>
        <begin position="83"/>
        <end position="509"/>
    </location>
</feature>
<feature type="domain" description="Protein kinase" evidence="4">
    <location>
        <begin position="143"/>
        <end position="423"/>
    </location>
</feature>
<feature type="region of interest" description="Disordered" evidence="5">
    <location>
        <begin position="1"/>
        <end position="44"/>
    </location>
</feature>
<feature type="region of interest" description="Disordered" evidence="5">
    <location>
        <begin position="468"/>
        <end position="509"/>
    </location>
</feature>
<feature type="compositionally biased region" description="Low complexity" evidence="5">
    <location>
        <begin position="18"/>
        <end position="34"/>
    </location>
</feature>
<feature type="compositionally biased region" description="Polar residues" evidence="5">
    <location>
        <begin position="468"/>
        <end position="499"/>
    </location>
</feature>
<feature type="active site" description="Proton acceptor" evidence="4">
    <location>
        <position position="267"/>
    </location>
</feature>
<feature type="binding site" evidence="4">
    <location>
        <begin position="149"/>
        <end position="157"/>
    </location>
    <ligand>
        <name>ATP</name>
        <dbReference type="ChEBI" id="CHEBI:30616"/>
    </ligand>
</feature>
<feature type="binding site" evidence="4">
    <location>
        <position position="171"/>
    </location>
    <ligand>
        <name>ATP</name>
        <dbReference type="ChEBI" id="CHEBI:30616"/>
    </ligand>
</feature>
<feature type="modified residue" description="Phosphothreonine" evidence="2">
    <location>
        <position position="132"/>
    </location>
</feature>
<feature type="modified residue" description="Phosphotyrosine" evidence="2">
    <location>
        <position position="216"/>
    </location>
</feature>
<feature type="modified residue" description="Phosphoserine" evidence="2">
    <location>
        <position position="300"/>
    </location>
</feature>
<feature type="modified residue" description="Phosphothreonine" evidence="2">
    <location>
        <position position="301"/>
    </location>
</feature>
<feature type="modified residue" description="Phosphothreonine" evidence="2">
    <location>
        <position position="306"/>
    </location>
</feature>
<feature type="modified residue" description="Phosphotyrosine" evidence="2">
    <location>
        <position position="314"/>
    </location>
</feature>
<accession>Q9C821</accession>
<sequence length="509" mass="55659">MSTDTIPSLSSPPAPEFPSTTPDTATSPAPSQPSIIGPSSLAPFPETTTNIDGGSRNVALTGLITGVVLGATFVLLGVCIFVCFYKRKKRKLKKKKKEDIEASINRDSLDPKDDSNNLQQWSSSEIGQNLFTYEDLSKATSNFSNTNLLGQGGFGYVHRGVLVDGTLVAIKQLKSGSGQGEREFQAEIQTISRVHHRHLVSLLGYCITGAQRLLVYEFVPNKTLEFHLHEKERPVMEWSKRMKIALGAAKGLAYLHEDCNPKTIHRDVKAANILIDDSYEAKLADFGLARSSLDTDTHVSTRIMGTFGYLAPEYASSGKLTEKSDVFSIGVVLLELITGRRPVDKSQPFADDDSIVDWAKPLMIQALNDGNFDGLVDPRLENDFDINEMTRMVACAAASVRHSAKRRPKMSQIVRAFEGNISIDDLTEGAAPGQSTIYSLDGSSDYSSTQYKEDLKKFKKMAFESKTFGSSECSGLTSDNGQNPSGSSSITEGQRTTQEIEPEKNTKDT</sequence>
<dbReference type="EC" id="2.7.11.1"/>
<dbReference type="EMBL" id="AC037424">
    <property type="protein sequence ID" value="AAG51550.1"/>
    <property type="molecule type" value="Genomic_DNA"/>
</dbReference>
<dbReference type="EMBL" id="CP002684">
    <property type="protein sequence ID" value="AEE32778.1"/>
    <property type="molecule type" value="Genomic_DNA"/>
</dbReference>
<dbReference type="EMBL" id="BT011757">
    <property type="protein sequence ID" value="AAS49120.1"/>
    <property type="molecule type" value="mRNA"/>
</dbReference>
<dbReference type="EMBL" id="AK221628">
    <property type="protein sequence ID" value="BAD95250.1"/>
    <property type="molecule type" value="mRNA"/>
</dbReference>
<dbReference type="PIR" id="A96563">
    <property type="entry name" value="A96563"/>
</dbReference>
<dbReference type="RefSeq" id="NP_175639.1">
    <property type="nucleotide sequence ID" value="NM_104108.4"/>
</dbReference>
<dbReference type="SMR" id="Q9C821"/>
<dbReference type="BioGRID" id="26884">
    <property type="interactions" value="23"/>
</dbReference>
<dbReference type="FunCoup" id="Q9C821">
    <property type="interactions" value="34"/>
</dbReference>
<dbReference type="IntAct" id="Q9C821">
    <property type="interactions" value="23"/>
</dbReference>
<dbReference type="STRING" id="3702.Q9C821"/>
<dbReference type="iPTMnet" id="Q9C821"/>
<dbReference type="PaxDb" id="3702-AT1G52290.1"/>
<dbReference type="ProteomicsDB" id="236679"/>
<dbReference type="EnsemblPlants" id="AT1G52290.1">
    <property type="protein sequence ID" value="AT1G52290.1"/>
    <property type="gene ID" value="AT1G52290"/>
</dbReference>
<dbReference type="GeneID" id="841659"/>
<dbReference type="Gramene" id="AT1G52290.1">
    <property type="protein sequence ID" value="AT1G52290.1"/>
    <property type="gene ID" value="AT1G52290"/>
</dbReference>
<dbReference type="KEGG" id="ath:AT1G52290"/>
<dbReference type="Araport" id="AT1G52290"/>
<dbReference type="TAIR" id="AT1G52290">
    <property type="gene designation" value="PERK15"/>
</dbReference>
<dbReference type="eggNOG" id="KOG1187">
    <property type="taxonomic scope" value="Eukaryota"/>
</dbReference>
<dbReference type="HOGENOM" id="CLU_000288_106_3_1"/>
<dbReference type="InParanoid" id="Q9C821"/>
<dbReference type="OMA" id="IRMTACA"/>
<dbReference type="PhylomeDB" id="Q9C821"/>
<dbReference type="PRO" id="PR:Q9C821"/>
<dbReference type="Proteomes" id="UP000006548">
    <property type="component" value="Chromosome 1"/>
</dbReference>
<dbReference type="ExpressionAtlas" id="Q9C821">
    <property type="expression patterns" value="baseline and differential"/>
</dbReference>
<dbReference type="GO" id="GO:0005886">
    <property type="term" value="C:plasma membrane"/>
    <property type="evidence" value="ECO:0007669"/>
    <property type="project" value="UniProtKB-SubCell"/>
</dbReference>
<dbReference type="GO" id="GO:0005524">
    <property type="term" value="F:ATP binding"/>
    <property type="evidence" value="ECO:0007669"/>
    <property type="project" value="UniProtKB-KW"/>
</dbReference>
<dbReference type="GO" id="GO:0106310">
    <property type="term" value="F:protein serine kinase activity"/>
    <property type="evidence" value="ECO:0007669"/>
    <property type="project" value="RHEA"/>
</dbReference>
<dbReference type="GO" id="GO:0004674">
    <property type="term" value="F:protein serine/threonine kinase activity"/>
    <property type="evidence" value="ECO:0007669"/>
    <property type="project" value="UniProtKB-KW"/>
</dbReference>
<dbReference type="FunFam" id="1.10.510.10:FF:000239">
    <property type="entry name" value="Proline-rich receptor-like protein kinase PERK1"/>
    <property type="match status" value="1"/>
</dbReference>
<dbReference type="FunFam" id="3.30.200.20:FF:000212">
    <property type="entry name" value="Proline-rich receptor-like protein kinase PERK8"/>
    <property type="match status" value="1"/>
</dbReference>
<dbReference type="Gene3D" id="3.30.200.20">
    <property type="entry name" value="Phosphorylase Kinase, domain 1"/>
    <property type="match status" value="1"/>
</dbReference>
<dbReference type="Gene3D" id="1.10.510.10">
    <property type="entry name" value="Transferase(Phosphotransferase) domain 1"/>
    <property type="match status" value="1"/>
</dbReference>
<dbReference type="InterPro" id="IPR011009">
    <property type="entry name" value="Kinase-like_dom_sf"/>
</dbReference>
<dbReference type="InterPro" id="IPR047117">
    <property type="entry name" value="PERK1-13-like"/>
</dbReference>
<dbReference type="InterPro" id="IPR000719">
    <property type="entry name" value="Prot_kinase_dom"/>
</dbReference>
<dbReference type="InterPro" id="IPR017441">
    <property type="entry name" value="Protein_kinase_ATP_BS"/>
</dbReference>
<dbReference type="InterPro" id="IPR001245">
    <property type="entry name" value="Ser-Thr/Tyr_kinase_cat_dom"/>
</dbReference>
<dbReference type="PANTHER" id="PTHR47982:SF33">
    <property type="entry name" value="PROLINE-RICH RECEPTOR-LIKE PROTEIN KINASE PERK15"/>
    <property type="match status" value="1"/>
</dbReference>
<dbReference type="PANTHER" id="PTHR47982">
    <property type="entry name" value="PROLINE-RICH RECEPTOR-LIKE PROTEIN KINASE PERK4"/>
    <property type="match status" value="1"/>
</dbReference>
<dbReference type="Pfam" id="PF07714">
    <property type="entry name" value="PK_Tyr_Ser-Thr"/>
    <property type="match status" value="1"/>
</dbReference>
<dbReference type="SMART" id="SM00220">
    <property type="entry name" value="S_TKc"/>
    <property type="match status" value="1"/>
</dbReference>
<dbReference type="SUPFAM" id="SSF56112">
    <property type="entry name" value="Protein kinase-like (PK-like)"/>
    <property type="match status" value="1"/>
</dbReference>
<dbReference type="PROSITE" id="PS00107">
    <property type="entry name" value="PROTEIN_KINASE_ATP"/>
    <property type="match status" value="1"/>
</dbReference>
<dbReference type="PROSITE" id="PS50011">
    <property type="entry name" value="PROTEIN_KINASE_DOM"/>
    <property type="match status" value="1"/>
</dbReference>
<keyword id="KW-0067">ATP-binding</keyword>
<keyword id="KW-1003">Cell membrane</keyword>
<keyword id="KW-0418">Kinase</keyword>
<keyword id="KW-0472">Membrane</keyword>
<keyword id="KW-0547">Nucleotide-binding</keyword>
<keyword id="KW-0597">Phosphoprotein</keyword>
<keyword id="KW-1185">Reference proteome</keyword>
<keyword id="KW-0723">Serine/threonine-protein kinase</keyword>
<keyword id="KW-0808">Transferase</keyword>
<keyword id="KW-0812">Transmembrane</keyword>
<keyword id="KW-1133">Transmembrane helix</keyword>
<organism>
    <name type="scientific">Arabidopsis thaliana</name>
    <name type="common">Mouse-ear cress</name>
    <dbReference type="NCBI Taxonomy" id="3702"/>
    <lineage>
        <taxon>Eukaryota</taxon>
        <taxon>Viridiplantae</taxon>
        <taxon>Streptophyta</taxon>
        <taxon>Embryophyta</taxon>
        <taxon>Tracheophyta</taxon>
        <taxon>Spermatophyta</taxon>
        <taxon>Magnoliopsida</taxon>
        <taxon>eudicotyledons</taxon>
        <taxon>Gunneridae</taxon>
        <taxon>Pentapetalae</taxon>
        <taxon>rosids</taxon>
        <taxon>malvids</taxon>
        <taxon>Brassicales</taxon>
        <taxon>Brassicaceae</taxon>
        <taxon>Camelineae</taxon>
        <taxon>Arabidopsis</taxon>
    </lineage>
</organism>
<name>PEK15_ARATH</name>